<feature type="chain" id="PRO_0000332958" description="Protein FAM90A12">
    <location>
        <begin position="1"/>
        <end position="464"/>
    </location>
</feature>
<feature type="region of interest" description="Disordered" evidence="2">
    <location>
        <begin position="1"/>
        <end position="42"/>
    </location>
</feature>
<feature type="region of interest" description="Disordered" evidence="2">
    <location>
        <begin position="70"/>
        <end position="389"/>
    </location>
</feature>
<feature type="region of interest" description="Disordered" evidence="2">
    <location>
        <begin position="411"/>
        <end position="437"/>
    </location>
</feature>
<feature type="compositionally biased region" description="Basic and acidic residues" evidence="2">
    <location>
        <begin position="74"/>
        <end position="89"/>
    </location>
</feature>
<feature type="compositionally biased region" description="Basic and acidic residues" evidence="2">
    <location>
        <begin position="97"/>
        <end position="114"/>
    </location>
</feature>
<feature type="compositionally biased region" description="Low complexity" evidence="2">
    <location>
        <begin position="180"/>
        <end position="197"/>
    </location>
</feature>
<organism>
    <name type="scientific">Homo sapiens</name>
    <name type="common">Human</name>
    <dbReference type="NCBI Taxonomy" id="9606"/>
    <lineage>
        <taxon>Eukaryota</taxon>
        <taxon>Metazoa</taxon>
        <taxon>Chordata</taxon>
        <taxon>Craniata</taxon>
        <taxon>Vertebrata</taxon>
        <taxon>Euteleostomi</taxon>
        <taxon>Mammalia</taxon>
        <taxon>Eutheria</taxon>
        <taxon>Euarchontoglires</taxon>
        <taxon>Primates</taxon>
        <taxon>Haplorrhini</taxon>
        <taxon>Catarrhini</taxon>
        <taxon>Hominidae</taxon>
        <taxon>Homo</taxon>
    </lineage>
</organism>
<gene>
    <name evidence="4" type="primary">FAM90A12</name>
    <name evidence="4" type="synonym">FAM90A12P</name>
</gene>
<keyword id="KW-1185">Reference proteome</keyword>
<reference key="1">
    <citation type="journal article" date="2006" name="Nature">
        <title>DNA sequence and analysis of human chromosome 8.</title>
        <authorList>
            <person name="Nusbaum C."/>
            <person name="Mikkelsen T.S."/>
            <person name="Zody M.C."/>
            <person name="Asakawa S."/>
            <person name="Taudien S."/>
            <person name="Garber M."/>
            <person name="Kodira C.D."/>
            <person name="Schueler M.G."/>
            <person name="Shimizu A."/>
            <person name="Whittaker C.A."/>
            <person name="Chang J.L."/>
            <person name="Cuomo C.A."/>
            <person name="Dewar K."/>
            <person name="FitzGerald M.G."/>
            <person name="Yang X."/>
            <person name="Allen N.R."/>
            <person name="Anderson S."/>
            <person name="Asakawa T."/>
            <person name="Blechschmidt K."/>
            <person name="Bloom T."/>
            <person name="Borowsky M.L."/>
            <person name="Butler J."/>
            <person name="Cook A."/>
            <person name="Corum B."/>
            <person name="DeArellano K."/>
            <person name="DeCaprio D."/>
            <person name="Dooley K.T."/>
            <person name="Dorris L. III"/>
            <person name="Engels R."/>
            <person name="Gloeckner G."/>
            <person name="Hafez N."/>
            <person name="Hagopian D.S."/>
            <person name="Hall J.L."/>
            <person name="Ishikawa S.K."/>
            <person name="Jaffe D.B."/>
            <person name="Kamat A."/>
            <person name="Kudoh J."/>
            <person name="Lehmann R."/>
            <person name="Lokitsang T."/>
            <person name="Macdonald P."/>
            <person name="Major J.E."/>
            <person name="Matthews C.D."/>
            <person name="Mauceli E."/>
            <person name="Menzel U."/>
            <person name="Mihalev A.H."/>
            <person name="Minoshima S."/>
            <person name="Murayama Y."/>
            <person name="Naylor J.W."/>
            <person name="Nicol R."/>
            <person name="Nguyen C."/>
            <person name="O'Leary S.B."/>
            <person name="O'Neill K."/>
            <person name="Parker S.C.J."/>
            <person name="Polley A."/>
            <person name="Raymond C.K."/>
            <person name="Reichwald K."/>
            <person name="Rodriguez J."/>
            <person name="Sasaki T."/>
            <person name="Schilhabel M."/>
            <person name="Siddiqui R."/>
            <person name="Smith C.L."/>
            <person name="Sneddon T.P."/>
            <person name="Talamas J.A."/>
            <person name="Tenzin P."/>
            <person name="Topham K."/>
            <person name="Venkataraman V."/>
            <person name="Wen G."/>
            <person name="Yamazaki S."/>
            <person name="Young S.K."/>
            <person name="Zeng Q."/>
            <person name="Zimmer A.R."/>
            <person name="Rosenthal A."/>
            <person name="Birren B.W."/>
            <person name="Platzer M."/>
            <person name="Shimizu N."/>
            <person name="Lander E.S."/>
        </authorList>
    </citation>
    <scope>NUCLEOTIDE SEQUENCE [LARGE SCALE GENOMIC DNA]</scope>
</reference>
<reference key="2">
    <citation type="journal article" date="2007" name="Hum. Mol. Genet.">
        <title>Characterization and evolution of the novel gene family FAM90A in primates originated by multiple duplication and rearrangement events.</title>
        <authorList>
            <person name="Bosch N."/>
            <person name="Caceres M."/>
            <person name="Cardone M.F."/>
            <person name="Carreras A."/>
            <person name="Ballana E."/>
            <person name="Rocchi M."/>
            <person name="Armengol L."/>
            <person name="Estivill X."/>
        </authorList>
    </citation>
    <scope>CHARACTERIZATION</scope>
</reference>
<accession>A8MX19</accession>
<dbReference type="EMBL" id="AC105233">
    <property type="status" value="NOT_ANNOTATED_CDS"/>
    <property type="molecule type" value="Genomic_DNA"/>
</dbReference>
<dbReference type="RefSeq" id="NP_001410460.1">
    <property type="nucleotide sequence ID" value="NM_001423531.1"/>
</dbReference>
<dbReference type="BioMuta" id="HGNC:32260"/>
<dbReference type="MassIVE" id="A8MX19"/>
<dbReference type="Ensembl" id="ENST00000519497.3">
    <property type="protein sequence ID" value="ENSP00000514268.1"/>
    <property type="gene ID" value="ENSG00000254229.4"/>
</dbReference>
<dbReference type="GeneID" id="645879"/>
<dbReference type="MANE-Select" id="ENST00000519497.3">
    <property type="protein sequence ID" value="ENSP00000514268.1"/>
    <property type="RefSeq nucleotide sequence ID" value="NM_001423531.1"/>
    <property type="RefSeq protein sequence ID" value="NP_001410460.1"/>
</dbReference>
<dbReference type="AGR" id="HGNC:32260"/>
<dbReference type="GeneCards" id="FAM90A12"/>
<dbReference type="HGNC" id="HGNC:32260">
    <property type="gene designation" value="FAM90A12"/>
</dbReference>
<dbReference type="HPA" id="ENSG00000254229">
    <property type="expression patterns" value="Not detected"/>
</dbReference>
<dbReference type="MIM" id="613048">
    <property type="type" value="gene"/>
</dbReference>
<dbReference type="neXtProt" id="NX_A8MX19"/>
<dbReference type="PharmGKB" id="PA142671807"/>
<dbReference type="GeneTree" id="ENSGT00910000144208"/>
<dbReference type="InParanoid" id="A8MX19"/>
<dbReference type="PAN-GO" id="A8MX19">
    <property type="GO annotations" value="0 GO annotations based on evolutionary models"/>
</dbReference>
<dbReference type="PhylomeDB" id="A8MX19"/>
<dbReference type="ChiTaRS" id="FAM90A12P">
    <property type="organism name" value="human"/>
</dbReference>
<dbReference type="Pharos" id="A8MX19">
    <property type="development level" value="Tdark"/>
</dbReference>
<dbReference type="PRO" id="PR:A8MX19"/>
<dbReference type="Proteomes" id="UP000005640">
    <property type="component" value="Chromosome 8"/>
</dbReference>
<dbReference type="RNAct" id="A8MX19">
    <property type="molecule type" value="protein"/>
</dbReference>
<dbReference type="InterPro" id="IPR039213">
    <property type="entry name" value="FAM90"/>
</dbReference>
<dbReference type="InterPro" id="IPR041670">
    <property type="entry name" value="Znf-CCHC_6"/>
</dbReference>
<dbReference type="PANTHER" id="PTHR16035:SF14">
    <property type="entry name" value="FAMILY WITH SEQUENCE SIMILARITY 90 MEMBER A11, PSEUDOGENE-RELATED"/>
    <property type="match status" value="1"/>
</dbReference>
<dbReference type="PANTHER" id="PTHR16035">
    <property type="entry name" value="PROTEIN FAM90A1"/>
    <property type="match status" value="1"/>
</dbReference>
<dbReference type="Pfam" id="PF15288">
    <property type="entry name" value="zf-CCHC_6"/>
    <property type="match status" value="1"/>
</dbReference>
<comment type="miscellaneous">
    <text evidence="1">Primate-specific FAM90A gene family, thought to have arisen during multiple duplication and rearrangement events.</text>
</comment>
<comment type="similarity">
    <text evidence="3">Belongs to the FAM90 family.</text>
</comment>
<sequence length="464" mass="49786">MMARRDPKSWAKRLVRAQTLQKQRRAPVGPRAPPPDEEDPRLKCKNCGAFGHTARSTRCPMKCWKAALVPATLGKKEGKENLKPWKPRAEANPGPLNKDKGEKEERPRQQDPQRKALLHMFSGKPPEKPLPNGKGSTESSDYLRVASGPMPVHTSSKRPRLDPILADRSATAMSGRGSVLASLSPLRKASLSSSSSLGPKERQTGAAADMPQPAVRHEGREPLLVVKPTHSRPEGGCREVPQAASKTHGLPQAARPQAQDKRPAVTSLPCPPAATHSLGLGSNLSFGPGAKRPAQAPIQACLNFPKKPRLGPFQIPESAIQGGELGAPENLQPPPAATELGPSTSPQMGRRTPAQVPSVDRQPPHSRPCLPTAQACTMSHHSAASHDGAQPLRVLFRRLENGRWSSSLLAAPSFHSPEKPGAFLAQSPHVSEKSEAPCVRVPPSVLYEDLQVSSSSEDSDSDLE</sequence>
<evidence type="ECO:0000250" key="1">
    <source>
        <dbReference type="UniProtKB" id="A6NIJ5"/>
    </source>
</evidence>
<evidence type="ECO:0000256" key="2">
    <source>
        <dbReference type="SAM" id="MobiDB-lite"/>
    </source>
</evidence>
<evidence type="ECO:0000305" key="3"/>
<evidence type="ECO:0000312" key="4">
    <source>
        <dbReference type="HGNC" id="HGNC:32260"/>
    </source>
</evidence>
<proteinExistence type="evidence at protein level"/>
<protein>
    <recommendedName>
        <fullName>Protein FAM90A12</fullName>
    </recommendedName>
    <alternativeName>
        <fullName>Protein FAM90A12P</fullName>
    </alternativeName>
</protein>
<name>F90AC_HUMAN</name>